<sequence length="593" mass="68549">MDSTFDARASNKSYLGSNSIALTKNFEDWNNEAVCEWLSENNFKMSDIEKFQENKIKGDHLEFIGDKILIQMGLSIYERLSFKSIFKKLKNNNKIKIDSTDNYKNECESNSINNSNNNNNNNNNNNNNNNNNNNNNNNNNNNNNNNNNNNNNNKIDTFNSSIKQLNFSQEANDPNIKAPILDINQYKLIEEIGRGAFSIVEKYENKLKPNEFISIKRINVLASEKEMIVKEINMLYSINHPNIIKIIGYYKDEHYYYIATPYYKKGSIAKIVKSIKSKNNSGFSESNVRNISKKILNAIDYLHSSNPPIVHRDIKGDNILLNDSDEPILADFGLSYLAIENNTNFKTACCSPFWAAPEILNKSTSDFSRKCDIYSFGCTILEMIVGSDPWGGKRNHQSHSPPIPTYLTLECKEVLNETLKYNQNFRADSKQLLEAQWFKETSLRNSSNGEIIFSSEDIMKEFKKNGSTIQIGPVKQEYKYKEQFDIENISKWPREPSFIDPKHKNYKEVLNLYDHYINHSPFMAKIGPYVLDLKEELNEKTFYKSLAISSILGKIDKYEPTTNQNLIPSLFFGFINFVLYQTIKHYPSKFRIL</sequence>
<protein>
    <recommendedName>
        <fullName>Probable serine/threonine-protein kinase samkB</fullName>
        <ecNumber>2.7.11.1</ecNumber>
    </recommendedName>
    <alternativeName>
        <fullName>SAM domain-containing protein kinase B</fullName>
    </alternativeName>
</protein>
<dbReference type="EC" id="2.7.11.1"/>
<dbReference type="EMBL" id="AAFI02000072">
    <property type="protein sequence ID" value="EAL65019.1"/>
    <property type="molecule type" value="Genomic_DNA"/>
</dbReference>
<dbReference type="RefSeq" id="XP_638369.1">
    <property type="nucleotide sequence ID" value="XM_633277.1"/>
</dbReference>
<dbReference type="SMR" id="Q54P26"/>
<dbReference type="FunCoup" id="Q54P26">
    <property type="interactions" value="1"/>
</dbReference>
<dbReference type="STRING" id="44689.Q54P26"/>
<dbReference type="PaxDb" id="44689-DDB0229884"/>
<dbReference type="EnsemblProtists" id="EAL65019">
    <property type="protein sequence ID" value="EAL65019"/>
    <property type="gene ID" value="DDB_G0284859"/>
</dbReference>
<dbReference type="GeneID" id="8624802"/>
<dbReference type="KEGG" id="ddi:DDB_G0284859"/>
<dbReference type="dictyBase" id="DDB_G0284859">
    <property type="gene designation" value="samkB"/>
</dbReference>
<dbReference type="VEuPathDB" id="AmoebaDB:DDB_G0284859"/>
<dbReference type="eggNOG" id="KOG0198">
    <property type="taxonomic scope" value="Eukaryota"/>
</dbReference>
<dbReference type="HOGENOM" id="CLU_492983_0_0_1"/>
<dbReference type="InParanoid" id="Q54P26"/>
<dbReference type="PhylomeDB" id="Q54P26"/>
<dbReference type="PRO" id="PR:Q54P26"/>
<dbReference type="Proteomes" id="UP000002195">
    <property type="component" value="Chromosome 4"/>
</dbReference>
<dbReference type="GO" id="GO:0005524">
    <property type="term" value="F:ATP binding"/>
    <property type="evidence" value="ECO:0007669"/>
    <property type="project" value="UniProtKB-KW"/>
</dbReference>
<dbReference type="GO" id="GO:0106310">
    <property type="term" value="F:protein serine kinase activity"/>
    <property type="evidence" value="ECO:0007669"/>
    <property type="project" value="RHEA"/>
</dbReference>
<dbReference type="GO" id="GO:0004674">
    <property type="term" value="F:protein serine/threonine kinase activity"/>
    <property type="evidence" value="ECO:0007669"/>
    <property type="project" value="UniProtKB-KW"/>
</dbReference>
<dbReference type="Gene3D" id="1.10.150.50">
    <property type="entry name" value="Transcription Factor, Ets-1"/>
    <property type="match status" value="1"/>
</dbReference>
<dbReference type="Gene3D" id="1.10.510.10">
    <property type="entry name" value="Transferase(Phosphotransferase) domain 1"/>
    <property type="match status" value="1"/>
</dbReference>
<dbReference type="InterPro" id="IPR011009">
    <property type="entry name" value="Kinase-like_dom_sf"/>
</dbReference>
<dbReference type="InterPro" id="IPR050538">
    <property type="entry name" value="MAP_kinase_kinase_kinase"/>
</dbReference>
<dbReference type="InterPro" id="IPR000719">
    <property type="entry name" value="Prot_kinase_dom"/>
</dbReference>
<dbReference type="InterPro" id="IPR001660">
    <property type="entry name" value="SAM"/>
</dbReference>
<dbReference type="InterPro" id="IPR013761">
    <property type="entry name" value="SAM/pointed_sf"/>
</dbReference>
<dbReference type="InterPro" id="IPR008271">
    <property type="entry name" value="Ser/Thr_kinase_AS"/>
</dbReference>
<dbReference type="PANTHER" id="PTHR48016">
    <property type="entry name" value="MAP KINASE KINASE KINASE SSK2-RELATED-RELATED"/>
    <property type="match status" value="1"/>
</dbReference>
<dbReference type="PANTHER" id="PTHR48016:SF56">
    <property type="entry name" value="MAPKK KINASE"/>
    <property type="match status" value="1"/>
</dbReference>
<dbReference type="Pfam" id="PF00069">
    <property type="entry name" value="Pkinase"/>
    <property type="match status" value="1"/>
</dbReference>
<dbReference type="SMART" id="SM00220">
    <property type="entry name" value="S_TKc"/>
    <property type="match status" value="1"/>
</dbReference>
<dbReference type="SUPFAM" id="SSF56112">
    <property type="entry name" value="Protein kinase-like (PK-like)"/>
    <property type="match status" value="1"/>
</dbReference>
<dbReference type="SUPFAM" id="SSF47769">
    <property type="entry name" value="SAM/Pointed domain"/>
    <property type="match status" value="1"/>
</dbReference>
<dbReference type="PROSITE" id="PS50011">
    <property type="entry name" value="PROTEIN_KINASE_DOM"/>
    <property type="match status" value="1"/>
</dbReference>
<dbReference type="PROSITE" id="PS00108">
    <property type="entry name" value="PROTEIN_KINASE_ST"/>
    <property type="match status" value="1"/>
</dbReference>
<dbReference type="PROSITE" id="PS50105">
    <property type="entry name" value="SAM_DOMAIN"/>
    <property type="match status" value="1"/>
</dbReference>
<organism>
    <name type="scientific">Dictyostelium discoideum</name>
    <name type="common">Social amoeba</name>
    <dbReference type="NCBI Taxonomy" id="44689"/>
    <lineage>
        <taxon>Eukaryota</taxon>
        <taxon>Amoebozoa</taxon>
        <taxon>Evosea</taxon>
        <taxon>Eumycetozoa</taxon>
        <taxon>Dictyostelia</taxon>
        <taxon>Dictyosteliales</taxon>
        <taxon>Dictyosteliaceae</taxon>
        <taxon>Dictyostelium</taxon>
    </lineage>
</organism>
<name>SAMKB_DICDI</name>
<reference key="1">
    <citation type="journal article" date="2005" name="Nature">
        <title>The genome of the social amoeba Dictyostelium discoideum.</title>
        <authorList>
            <person name="Eichinger L."/>
            <person name="Pachebat J.A."/>
            <person name="Gloeckner G."/>
            <person name="Rajandream M.A."/>
            <person name="Sucgang R."/>
            <person name="Berriman M."/>
            <person name="Song J."/>
            <person name="Olsen R."/>
            <person name="Szafranski K."/>
            <person name="Xu Q."/>
            <person name="Tunggal B."/>
            <person name="Kummerfeld S."/>
            <person name="Madera M."/>
            <person name="Konfortov B.A."/>
            <person name="Rivero F."/>
            <person name="Bankier A.T."/>
            <person name="Lehmann R."/>
            <person name="Hamlin N."/>
            <person name="Davies R."/>
            <person name="Gaudet P."/>
            <person name="Fey P."/>
            <person name="Pilcher K."/>
            <person name="Chen G."/>
            <person name="Saunders D."/>
            <person name="Sodergren E.J."/>
            <person name="Davis P."/>
            <person name="Kerhornou A."/>
            <person name="Nie X."/>
            <person name="Hall N."/>
            <person name="Anjard C."/>
            <person name="Hemphill L."/>
            <person name="Bason N."/>
            <person name="Farbrother P."/>
            <person name="Desany B."/>
            <person name="Just E."/>
            <person name="Morio T."/>
            <person name="Rost R."/>
            <person name="Churcher C.M."/>
            <person name="Cooper J."/>
            <person name="Haydock S."/>
            <person name="van Driessche N."/>
            <person name="Cronin A."/>
            <person name="Goodhead I."/>
            <person name="Muzny D.M."/>
            <person name="Mourier T."/>
            <person name="Pain A."/>
            <person name="Lu M."/>
            <person name="Harper D."/>
            <person name="Lindsay R."/>
            <person name="Hauser H."/>
            <person name="James K.D."/>
            <person name="Quiles M."/>
            <person name="Madan Babu M."/>
            <person name="Saito T."/>
            <person name="Buchrieser C."/>
            <person name="Wardroper A."/>
            <person name="Felder M."/>
            <person name="Thangavelu M."/>
            <person name="Johnson D."/>
            <person name="Knights A."/>
            <person name="Loulseged H."/>
            <person name="Mungall K.L."/>
            <person name="Oliver K."/>
            <person name="Price C."/>
            <person name="Quail M.A."/>
            <person name="Urushihara H."/>
            <person name="Hernandez J."/>
            <person name="Rabbinowitsch E."/>
            <person name="Steffen D."/>
            <person name="Sanders M."/>
            <person name="Ma J."/>
            <person name="Kohara Y."/>
            <person name="Sharp S."/>
            <person name="Simmonds M.N."/>
            <person name="Spiegler S."/>
            <person name="Tivey A."/>
            <person name="Sugano S."/>
            <person name="White B."/>
            <person name="Walker D."/>
            <person name="Woodward J.R."/>
            <person name="Winckler T."/>
            <person name="Tanaka Y."/>
            <person name="Shaulsky G."/>
            <person name="Schleicher M."/>
            <person name="Weinstock G.M."/>
            <person name="Rosenthal A."/>
            <person name="Cox E.C."/>
            <person name="Chisholm R.L."/>
            <person name="Gibbs R.A."/>
            <person name="Loomis W.F."/>
            <person name="Platzer M."/>
            <person name="Kay R.R."/>
            <person name="Williams J.G."/>
            <person name="Dear P.H."/>
            <person name="Noegel A.A."/>
            <person name="Barrell B.G."/>
            <person name="Kuspa A."/>
        </authorList>
    </citation>
    <scope>NUCLEOTIDE SEQUENCE [LARGE SCALE GENOMIC DNA]</scope>
    <source>
        <strain>AX4</strain>
    </source>
</reference>
<comment type="catalytic activity">
    <reaction>
        <text>L-seryl-[protein] + ATP = O-phospho-L-seryl-[protein] + ADP + H(+)</text>
        <dbReference type="Rhea" id="RHEA:17989"/>
        <dbReference type="Rhea" id="RHEA-COMP:9863"/>
        <dbReference type="Rhea" id="RHEA-COMP:11604"/>
        <dbReference type="ChEBI" id="CHEBI:15378"/>
        <dbReference type="ChEBI" id="CHEBI:29999"/>
        <dbReference type="ChEBI" id="CHEBI:30616"/>
        <dbReference type="ChEBI" id="CHEBI:83421"/>
        <dbReference type="ChEBI" id="CHEBI:456216"/>
        <dbReference type="EC" id="2.7.11.1"/>
    </reaction>
</comment>
<comment type="catalytic activity">
    <reaction>
        <text>L-threonyl-[protein] + ATP = O-phospho-L-threonyl-[protein] + ADP + H(+)</text>
        <dbReference type="Rhea" id="RHEA:46608"/>
        <dbReference type="Rhea" id="RHEA-COMP:11060"/>
        <dbReference type="Rhea" id="RHEA-COMP:11605"/>
        <dbReference type="ChEBI" id="CHEBI:15378"/>
        <dbReference type="ChEBI" id="CHEBI:30013"/>
        <dbReference type="ChEBI" id="CHEBI:30616"/>
        <dbReference type="ChEBI" id="CHEBI:61977"/>
        <dbReference type="ChEBI" id="CHEBI:456216"/>
        <dbReference type="EC" id="2.7.11.1"/>
    </reaction>
</comment>
<comment type="similarity">
    <text evidence="1">Belongs to the protein kinase superfamily. Ser/Thr protein kinase family.</text>
</comment>
<evidence type="ECO:0000255" key="1">
    <source>
        <dbReference type="PROSITE-ProRule" id="PRU00159"/>
    </source>
</evidence>
<evidence type="ECO:0000255" key="2">
    <source>
        <dbReference type="PROSITE-ProRule" id="PRU00184"/>
    </source>
</evidence>
<evidence type="ECO:0000255" key="3">
    <source>
        <dbReference type="PROSITE-ProRule" id="PRU10027"/>
    </source>
</evidence>
<evidence type="ECO:0000256" key="4">
    <source>
        <dbReference type="SAM" id="MobiDB-lite"/>
    </source>
</evidence>
<proteinExistence type="inferred from homology"/>
<feature type="chain" id="PRO_0000362031" description="Probable serine/threonine-protein kinase samkB">
    <location>
        <begin position="1"/>
        <end position="593"/>
    </location>
</feature>
<feature type="domain" description="SAM" evidence="2">
    <location>
        <begin position="29"/>
        <end position="93"/>
    </location>
</feature>
<feature type="domain" description="Protein kinase" evidence="1">
    <location>
        <begin position="186"/>
        <end position="438"/>
    </location>
</feature>
<feature type="region of interest" description="Disordered" evidence="4">
    <location>
        <begin position="108"/>
        <end position="157"/>
    </location>
</feature>
<feature type="compositionally biased region" description="Low complexity" evidence="4">
    <location>
        <begin position="113"/>
        <end position="153"/>
    </location>
</feature>
<feature type="active site" description="Proton acceptor" evidence="1 3">
    <location>
        <position position="313"/>
    </location>
</feature>
<feature type="binding site" evidence="1">
    <location>
        <begin position="192"/>
        <end position="200"/>
    </location>
    <ligand>
        <name>ATP</name>
        <dbReference type="ChEBI" id="CHEBI:30616"/>
    </ligand>
</feature>
<feature type="binding site" evidence="1">
    <location>
        <position position="216"/>
    </location>
    <ligand>
        <name>ATP</name>
        <dbReference type="ChEBI" id="CHEBI:30616"/>
    </ligand>
</feature>
<accession>Q54P26</accession>
<keyword id="KW-0067">ATP-binding</keyword>
<keyword id="KW-0418">Kinase</keyword>
<keyword id="KW-0547">Nucleotide-binding</keyword>
<keyword id="KW-1185">Reference proteome</keyword>
<keyword id="KW-0723">Serine/threonine-protein kinase</keyword>
<keyword id="KW-0808">Transferase</keyword>
<gene>
    <name type="primary">samkB</name>
    <name type="synonym">SAMK-B</name>
    <name type="synonym">smkB</name>
    <name type="ORF">DDB_G0284859</name>
</gene>